<reference key="1">
    <citation type="journal article" date="2007" name="Genome Biol.">
        <title>Characterization and modeling of the Haemophilus influenzae core and supragenomes based on the complete genomic sequences of Rd and 12 clinical nontypeable strains.</title>
        <authorList>
            <person name="Hogg J.S."/>
            <person name="Hu F.Z."/>
            <person name="Janto B."/>
            <person name="Boissy R."/>
            <person name="Hayes J."/>
            <person name="Keefe R."/>
            <person name="Post J.C."/>
            <person name="Ehrlich G.D."/>
        </authorList>
    </citation>
    <scope>NUCLEOTIDE SEQUENCE [LARGE SCALE GENOMIC DNA]</scope>
    <source>
        <strain>PittEE</strain>
    </source>
</reference>
<sequence length="169" mass="19131">MSEQKQDVAATEEQQPVLQIQRIYVKDVSFEAPNLPHIFQQEWKPKLGFDLSTETTQVGDNLYEVVLNISVETTLEDSGDVAFICEVKQAGVFTISGLEDVQMAHCLTSQCPNMLFPYARELVSNLVNRGTFPALNLSPVNFDALFVEYMNRQQAENAEEKSEEEQTKH</sequence>
<dbReference type="EMBL" id="CP000671">
    <property type="protein sequence ID" value="ABQ98983.1"/>
    <property type="molecule type" value="Genomic_DNA"/>
</dbReference>
<dbReference type="SMR" id="A5UDY2"/>
<dbReference type="KEGG" id="hip:CGSHiEE_08390"/>
<dbReference type="HOGENOM" id="CLU_111574_1_0_6"/>
<dbReference type="GO" id="GO:0005737">
    <property type="term" value="C:cytoplasm"/>
    <property type="evidence" value="ECO:0007669"/>
    <property type="project" value="UniProtKB-SubCell"/>
</dbReference>
<dbReference type="GO" id="GO:0051082">
    <property type="term" value="F:unfolded protein binding"/>
    <property type="evidence" value="ECO:0007669"/>
    <property type="project" value="InterPro"/>
</dbReference>
<dbReference type="GO" id="GO:0006457">
    <property type="term" value="P:protein folding"/>
    <property type="evidence" value="ECO:0007669"/>
    <property type="project" value="UniProtKB-UniRule"/>
</dbReference>
<dbReference type="GO" id="GO:0051262">
    <property type="term" value="P:protein tetramerization"/>
    <property type="evidence" value="ECO:0007669"/>
    <property type="project" value="InterPro"/>
</dbReference>
<dbReference type="GO" id="GO:0015031">
    <property type="term" value="P:protein transport"/>
    <property type="evidence" value="ECO:0007669"/>
    <property type="project" value="UniProtKB-UniRule"/>
</dbReference>
<dbReference type="CDD" id="cd00557">
    <property type="entry name" value="Translocase_SecB"/>
    <property type="match status" value="1"/>
</dbReference>
<dbReference type="Gene3D" id="3.10.420.10">
    <property type="entry name" value="SecB-like"/>
    <property type="match status" value="1"/>
</dbReference>
<dbReference type="HAMAP" id="MF_00821">
    <property type="entry name" value="SecB"/>
    <property type="match status" value="1"/>
</dbReference>
<dbReference type="InterPro" id="IPR003708">
    <property type="entry name" value="SecB"/>
</dbReference>
<dbReference type="InterPro" id="IPR035958">
    <property type="entry name" value="SecB-like_sf"/>
</dbReference>
<dbReference type="NCBIfam" id="NF004393">
    <property type="entry name" value="PRK05751.1-4"/>
    <property type="match status" value="1"/>
</dbReference>
<dbReference type="NCBIfam" id="TIGR00809">
    <property type="entry name" value="secB"/>
    <property type="match status" value="1"/>
</dbReference>
<dbReference type="PANTHER" id="PTHR36918">
    <property type="match status" value="1"/>
</dbReference>
<dbReference type="PANTHER" id="PTHR36918:SF1">
    <property type="entry name" value="PROTEIN-EXPORT PROTEIN SECB"/>
    <property type="match status" value="1"/>
</dbReference>
<dbReference type="Pfam" id="PF02556">
    <property type="entry name" value="SecB"/>
    <property type="match status" value="1"/>
</dbReference>
<dbReference type="PRINTS" id="PR01594">
    <property type="entry name" value="SECBCHAPRONE"/>
</dbReference>
<dbReference type="SUPFAM" id="SSF54611">
    <property type="entry name" value="SecB-like"/>
    <property type="match status" value="1"/>
</dbReference>
<accession>A5UDY2</accession>
<gene>
    <name evidence="1" type="primary">secB</name>
    <name type="ordered locus">CGSHiEE_08390</name>
</gene>
<proteinExistence type="inferred from homology"/>
<organism>
    <name type="scientific">Haemophilus influenzae (strain PittEE)</name>
    <dbReference type="NCBI Taxonomy" id="374930"/>
    <lineage>
        <taxon>Bacteria</taxon>
        <taxon>Pseudomonadati</taxon>
        <taxon>Pseudomonadota</taxon>
        <taxon>Gammaproteobacteria</taxon>
        <taxon>Pasteurellales</taxon>
        <taxon>Pasteurellaceae</taxon>
        <taxon>Haemophilus</taxon>
    </lineage>
</organism>
<name>SECB_HAEIE</name>
<evidence type="ECO:0000255" key="1">
    <source>
        <dbReference type="HAMAP-Rule" id="MF_00821"/>
    </source>
</evidence>
<comment type="function">
    <text evidence="1">One of the proteins required for the normal export of preproteins out of the cell cytoplasm. It is a molecular chaperone that binds to a subset of precursor proteins, maintaining them in a translocation-competent state. It also specifically binds to its receptor SecA.</text>
</comment>
<comment type="subunit">
    <text evidence="1">Homotetramer, a dimer of dimers. One homotetramer interacts with 1 SecA dimer.</text>
</comment>
<comment type="subcellular location">
    <subcellularLocation>
        <location evidence="1">Cytoplasm</location>
    </subcellularLocation>
</comment>
<comment type="similarity">
    <text evidence="1">Belongs to the SecB family.</text>
</comment>
<feature type="chain" id="PRO_1000062476" description="Protein-export protein SecB">
    <location>
        <begin position="1"/>
        <end position="169"/>
    </location>
</feature>
<keyword id="KW-0143">Chaperone</keyword>
<keyword id="KW-0963">Cytoplasm</keyword>
<keyword id="KW-0653">Protein transport</keyword>
<keyword id="KW-0811">Translocation</keyword>
<keyword id="KW-0813">Transport</keyword>
<protein>
    <recommendedName>
        <fullName evidence="1">Protein-export protein SecB</fullName>
    </recommendedName>
</protein>